<gene>
    <name evidence="1" type="primary">kup</name>
    <name type="ordered locus">Aave_4541</name>
</gene>
<proteinExistence type="inferred from homology"/>
<dbReference type="EMBL" id="CP000512">
    <property type="protein sequence ID" value="ABM35078.1"/>
    <property type="molecule type" value="Genomic_DNA"/>
</dbReference>
<dbReference type="RefSeq" id="WP_011797546.1">
    <property type="nucleotide sequence ID" value="NC_008752.1"/>
</dbReference>
<dbReference type="STRING" id="397945.Aave_4541"/>
<dbReference type="GeneID" id="79789529"/>
<dbReference type="KEGG" id="aav:Aave_4541"/>
<dbReference type="eggNOG" id="COG3158">
    <property type="taxonomic scope" value="Bacteria"/>
</dbReference>
<dbReference type="HOGENOM" id="CLU_008142_4_2_4"/>
<dbReference type="OrthoDB" id="9805577at2"/>
<dbReference type="Proteomes" id="UP000002596">
    <property type="component" value="Chromosome"/>
</dbReference>
<dbReference type="GO" id="GO:0005886">
    <property type="term" value="C:plasma membrane"/>
    <property type="evidence" value="ECO:0007669"/>
    <property type="project" value="UniProtKB-SubCell"/>
</dbReference>
<dbReference type="GO" id="GO:0015079">
    <property type="term" value="F:potassium ion transmembrane transporter activity"/>
    <property type="evidence" value="ECO:0007669"/>
    <property type="project" value="UniProtKB-UniRule"/>
</dbReference>
<dbReference type="GO" id="GO:0015293">
    <property type="term" value="F:symporter activity"/>
    <property type="evidence" value="ECO:0007669"/>
    <property type="project" value="UniProtKB-UniRule"/>
</dbReference>
<dbReference type="HAMAP" id="MF_01522">
    <property type="entry name" value="Kup"/>
    <property type="match status" value="1"/>
</dbReference>
<dbReference type="InterPro" id="IPR003855">
    <property type="entry name" value="K+_transporter"/>
</dbReference>
<dbReference type="InterPro" id="IPR053952">
    <property type="entry name" value="K_trans_C"/>
</dbReference>
<dbReference type="InterPro" id="IPR053951">
    <property type="entry name" value="K_trans_N"/>
</dbReference>
<dbReference type="InterPro" id="IPR023051">
    <property type="entry name" value="Kup"/>
</dbReference>
<dbReference type="PANTHER" id="PTHR30540:SF79">
    <property type="entry name" value="LOW AFFINITY POTASSIUM TRANSPORT SYSTEM PROTEIN KUP"/>
    <property type="match status" value="1"/>
</dbReference>
<dbReference type="PANTHER" id="PTHR30540">
    <property type="entry name" value="OSMOTIC STRESS POTASSIUM TRANSPORTER"/>
    <property type="match status" value="1"/>
</dbReference>
<dbReference type="Pfam" id="PF02705">
    <property type="entry name" value="K_trans"/>
    <property type="match status" value="1"/>
</dbReference>
<dbReference type="Pfam" id="PF22776">
    <property type="entry name" value="K_trans_C"/>
    <property type="match status" value="1"/>
</dbReference>
<feature type="chain" id="PRO_5000208647" description="Probable potassium transport system protein Kup">
    <location>
        <begin position="1"/>
        <end position="622"/>
    </location>
</feature>
<feature type="transmembrane region" description="Helical" evidence="1">
    <location>
        <begin position="8"/>
        <end position="28"/>
    </location>
</feature>
<feature type="transmembrane region" description="Helical" evidence="1">
    <location>
        <begin position="50"/>
        <end position="70"/>
    </location>
</feature>
<feature type="transmembrane region" description="Helical" evidence="1">
    <location>
        <begin position="103"/>
        <end position="123"/>
    </location>
</feature>
<feature type="transmembrane region" description="Helical" evidence="1">
    <location>
        <begin position="137"/>
        <end position="157"/>
    </location>
</feature>
<feature type="transmembrane region" description="Helical" evidence="1">
    <location>
        <begin position="169"/>
        <end position="189"/>
    </location>
</feature>
<feature type="transmembrane region" description="Helical" evidence="1">
    <location>
        <begin position="215"/>
        <end position="235"/>
    </location>
</feature>
<feature type="transmembrane region" description="Helical" evidence="1">
    <location>
        <begin position="247"/>
        <end position="267"/>
    </location>
</feature>
<feature type="transmembrane region" description="Helical" evidence="1">
    <location>
        <begin position="285"/>
        <end position="305"/>
    </location>
</feature>
<feature type="transmembrane region" description="Helical" evidence="1">
    <location>
        <begin position="337"/>
        <end position="357"/>
    </location>
</feature>
<feature type="transmembrane region" description="Helical" evidence="1">
    <location>
        <begin position="366"/>
        <end position="386"/>
    </location>
</feature>
<feature type="transmembrane region" description="Helical" evidence="1">
    <location>
        <begin position="393"/>
        <end position="413"/>
    </location>
</feature>
<feature type="transmembrane region" description="Helical" evidence="1">
    <location>
        <begin position="419"/>
        <end position="439"/>
    </location>
</feature>
<name>KUP_PARC0</name>
<protein>
    <recommendedName>
        <fullName evidence="1">Probable potassium transport system protein Kup</fullName>
    </recommendedName>
</protein>
<sequence length="622" mass="67380">MQRSKSSLAALTLGAIGVVYGDIGTSVLYAVKEVFGSGHVAFTPQNVYGVLSILFWTLTTIVSLKYVVLVLRADNNGEGGLIAMLALASQAVKDKPRLRSALLGIGVFGTSLFYGDGVITPAISVLSAVEGLEVVSPHFGKAVIPLTLIVLFCLFAVQKRGTSGIGRYFGPVTLVWFTSIAALGVPHIVGHPEILGALSPHHALGFIWRSPGTSFIILGAVVLCVTGAEALYADLGHFGKKPIRLAWFSVAMPALTINYFGQGALLLAEPEAVKNPFYMMAPDWALIPLVIMATMATVIASQALITGAFSVTKQVIQLGYLPRLNILHTSVRDTGQIYIPFVNWALFLAIVLAVVMFRSSSNLAAAYGIAVTLDMLITTVLTFFVIRYGWRYPLALCIAATGFFFLVDLAFFGSNLLKLLQGGWFPLMIGSIVFMLMMTWKRGRELLNEKLRADAIDLRDFLTAVFVNPPTRVDGTAVFLTAEPGAVPNALLHNLKHNKVLHQQNLFVTVRNHEVPWIGLDKRLQVEALGGDCWQVMVHYGFKNDPDLPGALALMRGRGCELESMTTSYFLSRDVVTPTIGSGMAPWREKLFAQMHHNASGAAGFLNLPSNSVVELGSKIEI</sequence>
<reference key="1">
    <citation type="submission" date="2006-12" db="EMBL/GenBank/DDBJ databases">
        <title>Complete sequence of Acidovorax avenae subsp. citrulli AAC00-1.</title>
        <authorList>
            <person name="Copeland A."/>
            <person name="Lucas S."/>
            <person name="Lapidus A."/>
            <person name="Barry K."/>
            <person name="Detter J.C."/>
            <person name="Glavina del Rio T."/>
            <person name="Dalin E."/>
            <person name="Tice H."/>
            <person name="Pitluck S."/>
            <person name="Kiss H."/>
            <person name="Brettin T."/>
            <person name="Bruce D."/>
            <person name="Han C."/>
            <person name="Tapia R."/>
            <person name="Gilna P."/>
            <person name="Schmutz J."/>
            <person name="Larimer F."/>
            <person name="Land M."/>
            <person name="Hauser L."/>
            <person name="Kyrpides N."/>
            <person name="Kim E."/>
            <person name="Stahl D."/>
            <person name="Richardson P."/>
        </authorList>
    </citation>
    <scope>NUCLEOTIDE SEQUENCE [LARGE SCALE GENOMIC DNA]</scope>
    <source>
        <strain>AAC00-1</strain>
    </source>
</reference>
<evidence type="ECO:0000255" key="1">
    <source>
        <dbReference type="HAMAP-Rule" id="MF_01522"/>
    </source>
</evidence>
<keyword id="KW-0997">Cell inner membrane</keyword>
<keyword id="KW-1003">Cell membrane</keyword>
<keyword id="KW-0406">Ion transport</keyword>
<keyword id="KW-0472">Membrane</keyword>
<keyword id="KW-0630">Potassium</keyword>
<keyword id="KW-0633">Potassium transport</keyword>
<keyword id="KW-0769">Symport</keyword>
<keyword id="KW-0812">Transmembrane</keyword>
<keyword id="KW-1133">Transmembrane helix</keyword>
<keyword id="KW-0813">Transport</keyword>
<organism>
    <name type="scientific">Paracidovorax citrulli (strain AAC00-1)</name>
    <name type="common">Acidovorax citrulli</name>
    <dbReference type="NCBI Taxonomy" id="397945"/>
    <lineage>
        <taxon>Bacteria</taxon>
        <taxon>Pseudomonadati</taxon>
        <taxon>Pseudomonadota</taxon>
        <taxon>Betaproteobacteria</taxon>
        <taxon>Burkholderiales</taxon>
        <taxon>Comamonadaceae</taxon>
        <taxon>Paracidovorax</taxon>
    </lineage>
</organism>
<comment type="function">
    <text evidence="1">Transport of potassium into the cell. Likely operates as a K(+):H(+) symporter.</text>
</comment>
<comment type="catalytic activity">
    <reaction evidence="1">
        <text>K(+)(in) + H(+)(in) = K(+)(out) + H(+)(out)</text>
        <dbReference type="Rhea" id="RHEA:28490"/>
        <dbReference type="ChEBI" id="CHEBI:15378"/>
        <dbReference type="ChEBI" id="CHEBI:29103"/>
    </reaction>
    <physiologicalReaction direction="right-to-left" evidence="1">
        <dbReference type="Rhea" id="RHEA:28492"/>
    </physiologicalReaction>
</comment>
<comment type="subcellular location">
    <subcellularLocation>
        <location evidence="1">Cell inner membrane</location>
        <topology evidence="1">Multi-pass membrane protein</topology>
    </subcellularLocation>
</comment>
<comment type="similarity">
    <text evidence="1">Belongs to the HAK/KUP transporter (TC 2.A.72) family.</text>
</comment>
<accession>A1TVU0</accession>